<gene>
    <name evidence="1" type="primary">mltF</name>
    <name type="ordered locus">Mfla_1131</name>
</gene>
<reference key="1">
    <citation type="submission" date="2006-03" db="EMBL/GenBank/DDBJ databases">
        <title>Complete sequence of Methylobacillus flagellatus KT.</title>
        <authorList>
            <consortium name="US DOE Joint Genome Institute"/>
            <person name="Copeland A."/>
            <person name="Lucas S."/>
            <person name="Lapidus A."/>
            <person name="Barry K."/>
            <person name="Detter J.C."/>
            <person name="Glavina del Rio T."/>
            <person name="Hammon N."/>
            <person name="Israni S."/>
            <person name="Dalin E."/>
            <person name="Tice H."/>
            <person name="Pitluck S."/>
            <person name="Brettin T."/>
            <person name="Bruce D."/>
            <person name="Han C."/>
            <person name="Tapia R."/>
            <person name="Saunders E."/>
            <person name="Gilna P."/>
            <person name="Schmutz J."/>
            <person name="Larimer F."/>
            <person name="Land M."/>
            <person name="Kyrpides N."/>
            <person name="Anderson I."/>
            <person name="Richardson P."/>
        </authorList>
    </citation>
    <scope>NUCLEOTIDE SEQUENCE [LARGE SCALE GENOMIC DNA]</scope>
    <source>
        <strain>ATCC 51484 / DSM 6875 / VKM B-1610 / KT</strain>
    </source>
</reference>
<organism>
    <name type="scientific">Methylobacillus flagellatus (strain ATCC 51484 / DSM 6875 / VKM B-1610 / KT)</name>
    <dbReference type="NCBI Taxonomy" id="265072"/>
    <lineage>
        <taxon>Bacteria</taxon>
        <taxon>Pseudomonadati</taxon>
        <taxon>Pseudomonadota</taxon>
        <taxon>Betaproteobacteria</taxon>
        <taxon>Nitrosomonadales</taxon>
        <taxon>Methylophilaceae</taxon>
        <taxon>Methylobacillus</taxon>
    </lineage>
</organism>
<evidence type="ECO:0000255" key="1">
    <source>
        <dbReference type="HAMAP-Rule" id="MF_02016"/>
    </source>
</evidence>
<proteinExistence type="inferred from homology"/>
<comment type="function">
    <text evidence="1">Murein-degrading enzyme that degrades murein glycan strands and insoluble, high-molecular weight murein sacculi, with the concomitant formation of a 1,6-anhydromuramoyl product. Lytic transglycosylases (LTs) play an integral role in the metabolism of the peptidoglycan (PG) sacculus. Their lytic action creates space within the PG sacculus to allow for its expansion as well as for the insertion of various structures such as secretion systems and flagella.</text>
</comment>
<comment type="catalytic activity">
    <reaction evidence="1">
        <text>Exolytic cleavage of the (1-&gt;4)-beta-glycosidic linkage between N-acetylmuramic acid (MurNAc) and N-acetylglucosamine (GlcNAc) residues in peptidoglycan, from either the reducing or the non-reducing ends of the peptidoglycan chains, with concomitant formation of a 1,6-anhydrobond in the MurNAc residue.</text>
        <dbReference type="EC" id="4.2.2.n1"/>
    </reaction>
</comment>
<comment type="subcellular location">
    <subcellularLocation>
        <location>Cell outer membrane</location>
        <topology>Peripheral membrane protein</topology>
    </subcellularLocation>
    <text evidence="1">Attached to the inner leaflet of the outer membrane.</text>
</comment>
<comment type="domain">
    <text evidence="1">The N-terminal domain does not have lytic activity and probably modulates enzymatic activity. The C-terminal domain is the catalytic active domain.</text>
</comment>
<comment type="similarity">
    <text evidence="1">In the N-terminal section; belongs to the bacterial solute-binding protein 3 family.</text>
</comment>
<comment type="similarity">
    <text evidence="1">In the C-terminal section; belongs to the transglycosylase Slt family.</text>
</comment>
<protein>
    <recommendedName>
        <fullName evidence="1">Membrane-bound lytic murein transglycosylase F</fullName>
        <ecNumber evidence="1">4.2.2.n1</ecNumber>
    </recommendedName>
    <alternativeName>
        <fullName evidence="1">Murein lyase F</fullName>
    </alternativeName>
</protein>
<dbReference type="EC" id="4.2.2.n1" evidence="1"/>
<dbReference type="EMBL" id="CP000284">
    <property type="protein sequence ID" value="ABE49399.1"/>
    <property type="molecule type" value="Genomic_DNA"/>
</dbReference>
<dbReference type="RefSeq" id="WP_011479353.1">
    <property type="nucleotide sequence ID" value="NC_007947.1"/>
</dbReference>
<dbReference type="SMR" id="Q1H288"/>
<dbReference type="STRING" id="265072.Mfla_1131"/>
<dbReference type="CAZy" id="GH23">
    <property type="family name" value="Glycoside Hydrolase Family 23"/>
</dbReference>
<dbReference type="KEGG" id="mfa:Mfla_1131"/>
<dbReference type="eggNOG" id="COG4623">
    <property type="taxonomic scope" value="Bacteria"/>
</dbReference>
<dbReference type="HOGENOM" id="CLU_027494_0_1_4"/>
<dbReference type="OrthoDB" id="9815002at2"/>
<dbReference type="Proteomes" id="UP000002440">
    <property type="component" value="Chromosome"/>
</dbReference>
<dbReference type="GO" id="GO:0009279">
    <property type="term" value="C:cell outer membrane"/>
    <property type="evidence" value="ECO:0007669"/>
    <property type="project" value="UniProtKB-SubCell"/>
</dbReference>
<dbReference type="GO" id="GO:0008933">
    <property type="term" value="F:peptidoglycan lytic transglycosylase activity"/>
    <property type="evidence" value="ECO:0007669"/>
    <property type="project" value="UniProtKB-UniRule"/>
</dbReference>
<dbReference type="GO" id="GO:0016998">
    <property type="term" value="P:cell wall macromolecule catabolic process"/>
    <property type="evidence" value="ECO:0007669"/>
    <property type="project" value="UniProtKB-UniRule"/>
</dbReference>
<dbReference type="GO" id="GO:0071555">
    <property type="term" value="P:cell wall organization"/>
    <property type="evidence" value="ECO:0007669"/>
    <property type="project" value="UniProtKB-KW"/>
</dbReference>
<dbReference type="GO" id="GO:0009253">
    <property type="term" value="P:peptidoglycan catabolic process"/>
    <property type="evidence" value="ECO:0007669"/>
    <property type="project" value="TreeGrafter"/>
</dbReference>
<dbReference type="CDD" id="cd13403">
    <property type="entry name" value="MLTF-like"/>
    <property type="match status" value="1"/>
</dbReference>
<dbReference type="CDD" id="cd01009">
    <property type="entry name" value="PBP2_YfhD_N"/>
    <property type="match status" value="1"/>
</dbReference>
<dbReference type="Gene3D" id="1.10.530.10">
    <property type="match status" value="1"/>
</dbReference>
<dbReference type="Gene3D" id="3.40.190.10">
    <property type="entry name" value="Periplasmic binding protein-like II"/>
    <property type="match status" value="2"/>
</dbReference>
<dbReference type="HAMAP" id="MF_02016">
    <property type="entry name" value="MltF"/>
    <property type="match status" value="1"/>
</dbReference>
<dbReference type="InterPro" id="IPR023346">
    <property type="entry name" value="Lysozyme-like_dom_sf"/>
</dbReference>
<dbReference type="InterPro" id="IPR023703">
    <property type="entry name" value="MltF"/>
</dbReference>
<dbReference type="InterPro" id="IPR001638">
    <property type="entry name" value="Solute-binding_3/MltF_N"/>
</dbReference>
<dbReference type="InterPro" id="IPR008258">
    <property type="entry name" value="Transglycosylase_SLT_dom_1"/>
</dbReference>
<dbReference type="NCBIfam" id="NF008112">
    <property type="entry name" value="PRK10859.1"/>
    <property type="match status" value="1"/>
</dbReference>
<dbReference type="PANTHER" id="PTHR35936">
    <property type="entry name" value="MEMBRANE-BOUND LYTIC MUREIN TRANSGLYCOSYLASE F"/>
    <property type="match status" value="1"/>
</dbReference>
<dbReference type="PANTHER" id="PTHR35936:SF32">
    <property type="entry name" value="MEMBRANE-BOUND LYTIC MUREIN TRANSGLYCOSYLASE F"/>
    <property type="match status" value="1"/>
</dbReference>
<dbReference type="Pfam" id="PF00497">
    <property type="entry name" value="SBP_bac_3"/>
    <property type="match status" value="1"/>
</dbReference>
<dbReference type="Pfam" id="PF01464">
    <property type="entry name" value="SLT"/>
    <property type="match status" value="1"/>
</dbReference>
<dbReference type="SMART" id="SM00062">
    <property type="entry name" value="PBPb"/>
    <property type="match status" value="1"/>
</dbReference>
<dbReference type="SUPFAM" id="SSF53955">
    <property type="entry name" value="Lysozyme-like"/>
    <property type="match status" value="1"/>
</dbReference>
<dbReference type="SUPFAM" id="SSF53850">
    <property type="entry name" value="Periplasmic binding protein-like II"/>
    <property type="match status" value="1"/>
</dbReference>
<dbReference type="PROSITE" id="PS51257">
    <property type="entry name" value="PROKAR_LIPOPROTEIN"/>
    <property type="match status" value="1"/>
</dbReference>
<accession>Q1H288</accession>
<name>MLTF_METFK</name>
<sequence>MRLLVIFLLALLLMACKEAPKPLADPRTTKEIIVVTHNGPSTYYYSGNNQYAGLEHDLVRNFVRELGPEYSVKFLVVNNISQVIPTLLKHKAHFAAADLSITRTREHLVRFTRPYQKVQQQIVFNNELTKAPKNIKELLNRQIAVPSGTSYSERLQRLKEQEPLLSWTETPHANSDELMAQVAEGELDFTVADGHLIALVQNYYPNLGATLALGKPEEIAWAFPKTGDTWLYEKANAFFTRISQDGTLNHLIDRYYGHADRLKPVDVTTFMQRSETLLPQYKRLFYEAQELTGLDWRLVAAIAYQESHWDRFNTSPTNVRGMMMLTEDTADRLGVTDRLDARQSIIAGARYVLMLKDLIPDSVHEPDRTWMALAAYNIGYAHLQDARILAKRLKLNPDRWVDVKKALPLLSKEEYFSTLKYGFARGGAPVVFVESVRTYHKILARREPRHTPIFPSFEVANLNGFGNTLSQE</sequence>
<feature type="signal peptide" evidence="1">
    <location>
        <begin position="1"/>
        <end position="24"/>
    </location>
</feature>
<feature type="chain" id="PRO_0000353950" description="Membrane-bound lytic murein transglycosylase F">
    <location>
        <begin position="25"/>
        <end position="472"/>
    </location>
</feature>
<feature type="region of interest" description="Non-LT domain" evidence="1">
    <location>
        <begin position="25"/>
        <end position="259"/>
    </location>
</feature>
<feature type="region of interest" description="LT domain" evidence="1">
    <location>
        <begin position="260"/>
        <end position="472"/>
    </location>
</feature>
<feature type="active site" evidence="1">
    <location>
        <position position="306"/>
    </location>
</feature>
<keyword id="KW-0998">Cell outer membrane</keyword>
<keyword id="KW-0961">Cell wall biogenesis/degradation</keyword>
<keyword id="KW-0456">Lyase</keyword>
<keyword id="KW-0472">Membrane</keyword>
<keyword id="KW-1185">Reference proteome</keyword>
<keyword id="KW-0732">Signal</keyword>